<accession>Q66C69</accession>
<evidence type="ECO:0000255" key="1">
    <source>
        <dbReference type="HAMAP-Rule" id="MF_00146"/>
    </source>
</evidence>
<evidence type="ECO:0000256" key="2">
    <source>
        <dbReference type="SAM" id="MobiDB-lite"/>
    </source>
</evidence>
<feature type="chain" id="PRO_1000009837" description="dCTP deaminase">
    <location>
        <begin position="1"/>
        <end position="193"/>
    </location>
</feature>
<feature type="region of interest" description="Disordered" evidence="2">
    <location>
        <begin position="169"/>
        <end position="193"/>
    </location>
</feature>
<feature type="active site" description="Proton donor/acceptor" evidence="1">
    <location>
        <position position="138"/>
    </location>
</feature>
<feature type="binding site" evidence="1">
    <location>
        <begin position="110"/>
        <end position="115"/>
    </location>
    <ligand>
        <name>dCTP</name>
        <dbReference type="ChEBI" id="CHEBI:61481"/>
    </ligand>
</feature>
<feature type="binding site" evidence="1">
    <location>
        <position position="128"/>
    </location>
    <ligand>
        <name>dCTP</name>
        <dbReference type="ChEBI" id="CHEBI:61481"/>
    </ligand>
</feature>
<feature type="binding site" evidence="1">
    <location>
        <begin position="136"/>
        <end position="138"/>
    </location>
    <ligand>
        <name>dCTP</name>
        <dbReference type="ChEBI" id="CHEBI:61481"/>
    </ligand>
</feature>
<feature type="binding site" evidence="1">
    <location>
        <position position="171"/>
    </location>
    <ligand>
        <name>dCTP</name>
        <dbReference type="ChEBI" id="CHEBI:61481"/>
    </ligand>
</feature>
<feature type="binding site" evidence="1">
    <location>
        <position position="178"/>
    </location>
    <ligand>
        <name>dCTP</name>
        <dbReference type="ChEBI" id="CHEBI:61481"/>
    </ligand>
</feature>
<feature type="binding site" evidence="1">
    <location>
        <position position="182"/>
    </location>
    <ligand>
        <name>dCTP</name>
        <dbReference type="ChEBI" id="CHEBI:61481"/>
    </ligand>
</feature>
<comment type="function">
    <text evidence="1">Catalyzes the deamination of dCTP to dUTP.</text>
</comment>
<comment type="catalytic activity">
    <reaction evidence="1">
        <text>dCTP + H2O + H(+) = dUTP + NH4(+)</text>
        <dbReference type="Rhea" id="RHEA:22680"/>
        <dbReference type="ChEBI" id="CHEBI:15377"/>
        <dbReference type="ChEBI" id="CHEBI:15378"/>
        <dbReference type="ChEBI" id="CHEBI:28938"/>
        <dbReference type="ChEBI" id="CHEBI:61481"/>
        <dbReference type="ChEBI" id="CHEBI:61555"/>
        <dbReference type="EC" id="3.5.4.13"/>
    </reaction>
</comment>
<comment type="pathway">
    <text evidence="1">Pyrimidine metabolism; dUMP biosynthesis; dUMP from dCTP (dUTP route): step 1/2.</text>
</comment>
<comment type="subunit">
    <text evidence="1">Homotrimer.</text>
</comment>
<comment type="similarity">
    <text evidence="1">Belongs to the dCTP deaminase family.</text>
</comment>
<protein>
    <recommendedName>
        <fullName evidence="1">dCTP deaminase</fullName>
        <ecNumber evidence="1">3.5.4.13</ecNumber>
    </recommendedName>
    <alternativeName>
        <fullName evidence="1">Deoxycytidine triphosphate deaminase</fullName>
    </alternativeName>
</protein>
<name>DCD_YERPS</name>
<reference key="1">
    <citation type="journal article" date="2004" name="Proc. Natl. Acad. Sci. U.S.A.">
        <title>Insights into the evolution of Yersinia pestis through whole-genome comparison with Yersinia pseudotuberculosis.</title>
        <authorList>
            <person name="Chain P.S.G."/>
            <person name="Carniel E."/>
            <person name="Larimer F.W."/>
            <person name="Lamerdin J."/>
            <person name="Stoutland P.O."/>
            <person name="Regala W.M."/>
            <person name="Georgescu A.M."/>
            <person name="Vergez L.M."/>
            <person name="Land M.L."/>
            <person name="Motin V.L."/>
            <person name="Brubaker R.R."/>
            <person name="Fowler J."/>
            <person name="Hinnebusch J."/>
            <person name="Marceau M."/>
            <person name="Medigue C."/>
            <person name="Simonet M."/>
            <person name="Chenal-Francisque V."/>
            <person name="Souza B."/>
            <person name="Dacheux D."/>
            <person name="Elliott J.M."/>
            <person name="Derbise A."/>
            <person name="Hauser L.J."/>
            <person name="Garcia E."/>
        </authorList>
    </citation>
    <scope>NUCLEOTIDE SEQUENCE [LARGE SCALE GENOMIC DNA]</scope>
    <source>
        <strain>IP32953</strain>
    </source>
</reference>
<gene>
    <name evidence="1" type="primary">dcd</name>
    <name type="ordered locus">YPTB1537</name>
</gene>
<organism>
    <name type="scientific">Yersinia pseudotuberculosis serotype I (strain IP32953)</name>
    <dbReference type="NCBI Taxonomy" id="273123"/>
    <lineage>
        <taxon>Bacteria</taxon>
        <taxon>Pseudomonadati</taxon>
        <taxon>Pseudomonadota</taxon>
        <taxon>Gammaproteobacteria</taxon>
        <taxon>Enterobacterales</taxon>
        <taxon>Yersiniaceae</taxon>
        <taxon>Yersinia</taxon>
    </lineage>
</organism>
<dbReference type="EC" id="3.5.4.13" evidence="1"/>
<dbReference type="EMBL" id="BX936398">
    <property type="protein sequence ID" value="CAH20776.1"/>
    <property type="molecule type" value="Genomic_DNA"/>
</dbReference>
<dbReference type="RefSeq" id="WP_002211873.1">
    <property type="nucleotide sequence ID" value="NZ_CP009712.1"/>
</dbReference>
<dbReference type="SMR" id="Q66C69"/>
<dbReference type="GeneID" id="96665144"/>
<dbReference type="KEGG" id="ypo:BZ17_978"/>
<dbReference type="KEGG" id="yps:YPTB1537"/>
<dbReference type="PATRIC" id="fig|273123.14.peg.1038"/>
<dbReference type="UniPathway" id="UPA00610">
    <property type="reaction ID" value="UER00665"/>
</dbReference>
<dbReference type="Proteomes" id="UP000001011">
    <property type="component" value="Chromosome"/>
</dbReference>
<dbReference type="GO" id="GO:0008829">
    <property type="term" value="F:dCTP deaminase activity"/>
    <property type="evidence" value="ECO:0007669"/>
    <property type="project" value="UniProtKB-UniRule"/>
</dbReference>
<dbReference type="GO" id="GO:0000166">
    <property type="term" value="F:nucleotide binding"/>
    <property type="evidence" value="ECO:0007669"/>
    <property type="project" value="UniProtKB-KW"/>
</dbReference>
<dbReference type="GO" id="GO:0006226">
    <property type="term" value="P:dUMP biosynthetic process"/>
    <property type="evidence" value="ECO:0007669"/>
    <property type="project" value="UniProtKB-UniPathway"/>
</dbReference>
<dbReference type="GO" id="GO:0006229">
    <property type="term" value="P:dUTP biosynthetic process"/>
    <property type="evidence" value="ECO:0007669"/>
    <property type="project" value="UniProtKB-UniRule"/>
</dbReference>
<dbReference type="GO" id="GO:0015949">
    <property type="term" value="P:nucleobase-containing small molecule interconversion"/>
    <property type="evidence" value="ECO:0007669"/>
    <property type="project" value="TreeGrafter"/>
</dbReference>
<dbReference type="CDD" id="cd07557">
    <property type="entry name" value="trimeric_dUTPase"/>
    <property type="match status" value="1"/>
</dbReference>
<dbReference type="FunFam" id="2.70.40.10:FF:000003">
    <property type="entry name" value="dCTP deaminase"/>
    <property type="match status" value="1"/>
</dbReference>
<dbReference type="Gene3D" id="2.70.40.10">
    <property type="match status" value="1"/>
</dbReference>
<dbReference type="HAMAP" id="MF_00146">
    <property type="entry name" value="dCTP_deaminase"/>
    <property type="match status" value="1"/>
</dbReference>
<dbReference type="InterPro" id="IPR011962">
    <property type="entry name" value="dCTP_deaminase"/>
</dbReference>
<dbReference type="InterPro" id="IPR036157">
    <property type="entry name" value="dUTPase-like_sf"/>
</dbReference>
<dbReference type="InterPro" id="IPR033704">
    <property type="entry name" value="dUTPase_trimeric"/>
</dbReference>
<dbReference type="NCBIfam" id="TIGR02274">
    <property type="entry name" value="dCTP_deam"/>
    <property type="match status" value="1"/>
</dbReference>
<dbReference type="PANTHER" id="PTHR42680">
    <property type="entry name" value="DCTP DEAMINASE"/>
    <property type="match status" value="1"/>
</dbReference>
<dbReference type="PANTHER" id="PTHR42680:SF3">
    <property type="entry name" value="DCTP DEAMINASE"/>
    <property type="match status" value="1"/>
</dbReference>
<dbReference type="Pfam" id="PF22769">
    <property type="entry name" value="DCD"/>
    <property type="match status" value="1"/>
</dbReference>
<dbReference type="SUPFAM" id="SSF51283">
    <property type="entry name" value="dUTPase-like"/>
    <property type="match status" value="1"/>
</dbReference>
<keyword id="KW-0378">Hydrolase</keyword>
<keyword id="KW-0546">Nucleotide metabolism</keyword>
<keyword id="KW-0547">Nucleotide-binding</keyword>
<sequence>MRLCDRDIEAWLDSGKLGIEPRPPVERINGATVDVRLGNQFRVFRGHTAAFIDLSGPKDEVSAALERVMSDEINLPEGEAFFLHPGELALAVTLESVTIPDDLVGWLDGRSSLARLGLMVHVTAHRIDPGWQGRIVLEFYNSGKLPLALRPGMLIGALSFEPLSGPAARPYNSRQDAKYRGQQGAVASRIDKD</sequence>
<proteinExistence type="inferred from homology"/>